<proteinExistence type="inferred from homology"/>
<feature type="chain" id="PRO_0000248778" description="Proline--tRNA ligase">
    <location>
        <begin position="1"/>
        <end position="617"/>
    </location>
</feature>
<name>SYP_STRR6</name>
<protein>
    <recommendedName>
        <fullName evidence="1">Proline--tRNA ligase</fullName>
        <ecNumber evidence="1">6.1.1.15</ecNumber>
    </recommendedName>
    <alternativeName>
        <fullName evidence="1">Prolyl-tRNA synthetase</fullName>
        <shortName evidence="1">ProRS</shortName>
    </alternativeName>
</protein>
<comment type="function">
    <text evidence="1">Catalyzes the attachment of proline to tRNA(Pro) in a two-step reaction: proline is first activated by ATP to form Pro-AMP and then transferred to the acceptor end of tRNA(Pro). As ProRS can inadvertently accommodate and process non-cognate amino acids such as alanine and cysteine, to avoid such errors it has two additional distinct editing activities against alanine. One activity is designated as 'pretransfer' editing and involves the tRNA(Pro)-independent hydrolysis of activated Ala-AMP. The other activity is designated 'posttransfer' editing and involves deacylation of mischarged Ala-tRNA(Pro). The misacylated Cys-tRNA(Pro) is not edited by ProRS.</text>
</comment>
<comment type="catalytic activity">
    <reaction evidence="1">
        <text>tRNA(Pro) + L-proline + ATP = L-prolyl-tRNA(Pro) + AMP + diphosphate</text>
        <dbReference type="Rhea" id="RHEA:14305"/>
        <dbReference type="Rhea" id="RHEA-COMP:9700"/>
        <dbReference type="Rhea" id="RHEA-COMP:9702"/>
        <dbReference type="ChEBI" id="CHEBI:30616"/>
        <dbReference type="ChEBI" id="CHEBI:33019"/>
        <dbReference type="ChEBI" id="CHEBI:60039"/>
        <dbReference type="ChEBI" id="CHEBI:78442"/>
        <dbReference type="ChEBI" id="CHEBI:78532"/>
        <dbReference type="ChEBI" id="CHEBI:456215"/>
        <dbReference type="EC" id="6.1.1.15"/>
    </reaction>
</comment>
<comment type="subunit">
    <text evidence="1">Homodimer.</text>
</comment>
<comment type="subcellular location">
    <subcellularLocation>
        <location evidence="1">Cytoplasm</location>
    </subcellularLocation>
</comment>
<comment type="domain">
    <text evidence="1">Consists of three domains: the N-terminal catalytic domain, the editing domain and the C-terminal anticodon-binding domain.</text>
</comment>
<comment type="similarity">
    <text evidence="1">Belongs to the class-II aminoacyl-tRNA synthetase family. ProS type 1 subfamily.</text>
</comment>
<keyword id="KW-0030">Aminoacyl-tRNA synthetase</keyword>
<keyword id="KW-0067">ATP-binding</keyword>
<keyword id="KW-0963">Cytoplasm</keyword>
<keyword id="KW-0436">Ligase</keyword>
<keyword id="KW-0547">Nucleotide-binding</keyword>
<keyword id="KW-0648">Protein biosynthesis</keyword>
<keyword id="KW-1185">Reference proteome</keyword>
<evidence type="ECO:0000255" key="1">
    <source>
        <dbReference type="HAMAP-Rule" id="MF_01569"/>
    </source>
</evidence>
<organism>
    <name type="scientific">Streptococcus pneumoniae (strain ATCC BAA-255 / R6)</name>
    <dbReference type="NCBI Taxonomy" id="171101"/>
    <lineage>
        <taxon>Bacteria</taxon>
        <taxon>Bacillati</taxon>
        <taxon>Bacillota</taxon>
        <taxon>Bacilli</taxon>
        <taxon>Lactobacillales</taxon>
        <taxon>Streptococcaceae</taxon>
        <taxon>Streptococcus</taxon>
    </lineage>
</organism>
<gene>
    <name evidence="1" type="primary">proS</name>
    <name type="ordered locus">spr0243</name>
</gene>
<sequence length="617" mass="68651">MKQSKMPIPTLREMPSDAQVISHALMLRAGYVRQVSAGVYSYLPLANRVIEKAKNIMRQEFEKIGAVEMLAPALLSAELWRESGRYETYGEDLYKLKNREKSDFILGPTHEETFTAIVRDSVKSYKQLPLNLYQIQPKYRDEKRPRNGLLRTREFIMKDAYSFHANYDSLDSVYDEYKAAYERIFTRSGLDFKAIIGDGGAMGGKDSQEFMAITSARTDLDRWVVLDKSVVSFDEIPVEVQEEIKAELLKWIVSGEDTIAYSSESSYAANLEMATNEYKPSNRVVAEEEVTRVATPDVKSIDEVAAFLNVPEEQTIKTLFYIADGELVAALLVGNDQLNEVKLKNHLGADFFDVASEEEVANVVQAGFGSLGPVGLPENIKIIADRKVQDVRNAVVGANEDGYHLTGVNPGRDFTAEYVDIREVREGEISPDGQGVLNFARGIEIGHIFKLGTRYSASMGADVLDENGRAVPIIMGCYGIGVSRLLSAVMEQHARLFVNKTPKGEYRYAWGINFPKELAPFDVHLITVNVKDEEAQALTEKLEASLMGAGYEVLTDDRNERVGVKFSDSDLIGLPIRITVGKKAADGIVEVKIKATGDTIEVHADNVLETLEILSKK</sequence>
<reference key="1">
    <citation type="journal article" date="2001" name="J. Bacteriol.">
        <title>Genome of the bacterium Streptococcus pneumoniae strain R6.</title>
        <authorList>
            <person name="Hoskins J."/>
            <person name="Alborn W.E. Jr."/>
            <person name="Arnold J."/>
            <person name="Blaszczak L.C."/>
            <person name="Burgett S."/>
            <person name="DeHoff B.S."/>
            <person name="Estrem S.T."/>
            <person name="Fritz L."/>
            <person name="Fu D.-J."/>
            <person name="Fuller W."/>
            <person name="Geringer C."/>
            <person name="Gilmour R."/>
            <person name="Glass J.S."/>
            <person name="Khoja H."/>
            <person name="Kraft A.R."/>
            <person name="Lagace R.E."/>
            <person name="LeBlanc D.J."/>
            <person name="Lee L.N."/>
            <person name="Lefkowitz E.J."/>
            <person name="Lu J."/>
            <person name="Matsushima P."/>
            <person name="McAhren S.M."/>
            <person name="McHenney M."/>
            <person name="McLeaster K."/>
            <person name="Mundy C.W."/>
            <person name="Nicas T.I."/>
            <person name="Norris F.H."/>
            <person name="O'Gara M."/>
            <person name="Peery R.B."/>
            <person name="Robertson G.T."/>
            <person name="Rockey P."/>
            <person name="Sun P.-M."/>
            <person name="Winkler M.E."/>
            <person name="Yang Y."/>
            <person name="Young-Bellido M."/>
            <person name="Zhao G."/>
            <person name="Zook C.A."/>
            <person name="Baltz R.H."/>
            <person name="Jaskunas S.R."/>
            <person name="Rosteck P.R. Jr."/>
            <person name="Skatrud P.L."/>
            <person name="Glass J.I."/>
        </authorList>
    </citation>
    <scope>NUCLEOTIDE SEQUENCE [LARGE SCALE GENOMIC DNA]</scope>
    <source>
        <strain>ATCC BAA-255 / R6</strain>
    </source>
</reference>
<dbReference type="EC" id="6.1.1.15" evidence="1"/>
<dbReference type="EMBL" id="AE007317">
    <property type="protein sequence ID" value="AAK99047.1"/>
    <property type="molecule type" value="Genomic_DNA"/>
</dbReference>
<dbReference type="PIR" id="C97902">
    <property type="entry name" value="C97902"/>
</dbReference>
<dbReference type="RefSeq" id="NP_357837.1">
    <property type="nucleotide sequence ID" value="NC_003098.1"/>
</dbReference>
<dbReference type="RefSeq" id="WP_000814078.1">
    <property type="nucleotide sequence ID" value="NC_003098.1"/>
</dbReference>
<dbReference type="SMR" id="Q8DRB0"/>
<dbReference type="STRING" id="171101.spr0243"/>
<dbReference type="KEGG" id="spr:spr0243"/>
<dbReference type="PATRIC" id="fig|171101.6.peg.277"/>
<dbReference type="eggNOG" id="COG0442">
    <property type="taxonomic scope" value="Bacteria"/>
</dbReference>
<dbReference type="HOGENOM" id="CLU_016739_0_0_9"/>
<dbReference type="Proteomes" id="UP000000586">
    <property type="component" value="Chromosome"/>
</dbReference>
<dbReference type="GO" id="GO:0005829">
    <property type="term" value="C:cytosol"/>
    <property type="evidence" value="ECO:0000318"/>
    <property type="project" value="GO_Central"/>
</dbReference>
<dbReference type="GO" id="GO:0002161">
    <property type="term" value="F:aminoacyl-tRNA deacylase activity"/>
    <property type="evidence" value="ECO:0007669"/>
    <property type="project" value="InterPro"/>
</dbReference>
<dbReference type="GO" id="GO:0005524">
    <property type="term" value="F:ATP binding"/>
    <property type="evidence" value="ECO:0007669"/>
    <property type="project" value="UniProtKB-UniRule"/>
</dbReference>
<dbReference type="GO" id="GO:0140096">
    <property type="term" value="F:catalytic activity, acting on a protein"/>
    <property type="evidence" value="ECO:0007669"/>
    <property type="project" value="UniProtKB-ARBA"/>
</dbReference>
<dbReference type="GO" id="GO:0004827">
    <property type="term" value="F:proline-tRNA ligase activity"/>
    <property type="evidence" value="ECO:0000318"/>
    <property type="project" value="GO_Central"/>
</dbReference>
<dbReference type="GO" id="GO:0016740">
    <property type="term" value="F:transferase activity"/>
    <property type="evidence" value="ECO:0007669"/>
    <property type="project" value="UniProtKB-ARBA"/>
</dbReference>
<dbReference type="GO" id="GO:0006433">
    <property type="term" value="P:prolyl-tRNA aminoacylation"/>
    <property type="evidence" value="ECO:0000318"/>
    <property type="project" value="GO_Central"/>
</dbReference>
<dbReference type="CDD" id="cd04334">
    <property type="entry name" value="ProRS-INS"/>
    <property type="match status" value="1"/>
</dbReference>
<dbReference type="CDD" id="cd00861">
    <property type="entry name" value="ProRS_anticodon_short"/>
    <property type="match status" value="1"/>
</dbReference>
<dbReference type="CDD" id="cd00779">
    <property type="entry name" value="ProRS_core_prok"/>
    <property type="match status" value="1"/>
</dbReference>
<dbReference type="FunFam" id="3.30.930.10:FF:000062">
    <property type="entry name" value="Proline--tRNA ligase"/>
    <property type="match status" value="1"/>
</dbReference>
<dbReference type="FunFam" id="3.30.930.10:FF:000070">
    <property type="entry name" value="Proline--tRNA ligase"/>
    <property type="match status" value="1"/>
</dbReference>
<dbReference type="FunFam" id="3.40.50.800:FF:000011">
    <property type="entry name" value="Proline--tRNA ligase"/>
    <property type="match status" value="1"/>
</dbReference>
<dbReference type="FunFam" id="3.90.960.10:FF:000004">
    <property type="entry name" value="Proline--tRNA ligase"/>
    <property type="match status" value="1"/>
</dbReference>
<dbReference type="Gene3D" id="3.40.50.800">
    <property type="entry name" value="Anticodon-binding domain"/>
    <property type="match status" value="1"/>
</dbReference>
<dbReference type="Gene3D" id="3.30.930.10">
    <property type="entry name" value="Bira Bifunctional Protein, Domain 2"/>
    <property type="match status" value="2"/>
</dbReference>
<dbReference type="Gene3D" id="3.90.960.10">
    <property type="entry name" value="YbaK/aminoacyl-tRNA synthetase-associated domain"/>
    <property type="match status" value="1"/>
</dbReference>
<dbReference type="HAMAP" id="MF_01569">
    <property type="entry name" value="Pro_tRNA_synth_type1"/>
    <property type="match status" value="1"/>
</dbReference>
<dbReference type="InterPro" id="IPR002314">
    <property type="entry name" value="aa-tRNA-synt_IIb"/>
</dbReference>
<dbReference type="InterPro" id="IPR006195">
    <property type="entry name" value="aa-tRNA-synth_II"/>
</dbReference>
<dbReference type="InterPro" id="IPR045864">
    <property type="entry name" value="aa-tRNA-synth_II/BPL/LPL"/>
</dbReference>
<dbReference type="InterPro" id="IPR004154">
    <property type="entry name" value="Anticodon-bd"/>
</dbReference>
<dbReference type="InterPro" id="IPR036621">
    <property type="entry name" value="Anticodon-bd_dom_sf"/>
</dbReference>
<dbReference type="InterPro" id="IPR002316">
    <property type="entry name" value="Pro-tRNA-ligase_IIa"/>
</dbReference>
<dbReference type="InterPro" id="IPR004500">
    <property type="entry name" value="Pro-tRNA-synth_IIa_bac-type"/>
</dbReference>
<dbReference type="InterPro" id="IPR023717">
    <property type="entry name" value="Pro-tRNA-Synthase_IIa_type1"/>
</dbReference>
<dbReference type="InterPro" id="IPR050062">
    <property type="entry name" value="Pro-tRNA_synthetase"/>
</dbReference>
<dbReference type="InterPro" id="IPR044140">
    <property type="entry name" value="ProRS_anticodon_short"/>
</dbReference>
<dbReference type="InterPro" id="IPR033730">
    <property type="entry name" value="ProRS_core_prok"/>
</dbReference>
<dbReference type="InterPro" id="IPR036754">
    <property type="entry name" value="YbaK/aa-tRNA-synt-asso_dom_sf"/>
</dbReference>
<dbReference type="InterPro" id="IPR007214">
    <property type="entry name" value="YbaK/aa-tRNA-synth-assoc-dom"/>
</dbReference>
<dbReference type="NCBIfam" id="NF006625">
    <property type="entry name" value="PRK09194.1"/>
    <property type="match status" value="1"/>
</dbReference>
<dbReference type="NCBIfam" id="TIGR00409">
    <property type="entry name" value="proS_fam_II"/>
    <property type="match status" value="2"/>
</dbReference>
<dbReference type="PANTHER" id="PTHR42753">
    <property type="entry name" value="MITOCHONDRIAL RIBOSOME PROTEIN L39/PROLYL-TRNA LIGASE FAMILY MEMBER"/>
    <property type="match status" value="1"/>
</dbReference>
<dbReference type="PANTHER" id="PTHR42753:SF2">
    <property type="entry name" value="PROLINE--TRNA LIGASE"/>
    <property type="match status" value="1"/>
</dbReference>
<dbReference type="Pfam" id="PF03129">
    <property type="entry name" value="HGTP_anticodon"/>
    <property type="match status" value="1"/>
</dbReference>
<dbReference type="Pfam" id="PF00587">
    <property type="entry name" value="tRNA-synt_2b"/>
    <property type="match status" value="1"/>
</dbReference>
<dbReference type="Pfam" id="PF04073">
    <property type="entry name" value="tRNA_edit"/>
    <property type="match status" value="1"/>
</dbReference>
<dbReference type="PRINTS" id="PR01046">
    <property type="entry name" value="TRNASYNTHPRO"/>
</dbReference>
<dbReference type="SUPFAM" id="SSF52954">
    <property type="entry name" value="Class II aaRS ABD-related"/>
    <property type="match status" value="1"/>
</dbReference>
<dbReference type="SUPFAM" id="SSF55681">
    <property type="entry name" value="Class II aaRS and biotin synthetases"/>
    <property type="match status" value="1"/>
</dbReference>
<dbReference type="SUPFAM" id="SSF55826">
    <property type="entry name" value="YbaK/ProRS associated domain"/>
    <property type="match status" value="1"/>
</dbReference>
<dbReference type="PROSITE" id="PS50862">
    <property type="entry name" value="AA_TRNA_LIGASE_II"/>
    <property type="match status" value="1"/>
</dbReference>
<accession>Q8DRB0</accession>